<dbReference type="EMBL" id="X78270">
    <property type="protein sequence ID" value="CAA55076.1"/>
    <property type="molecule type" value="Genomic_DNA"/>
</dbReference>
<dbReference type="EMBL" id="X77305">
    <property type="protein sequence ID" value="CAA54510.1"/>
    <property type="molecule type" value="Genomic_DNA"/>
</dbReference>
<dbReference type="EMBL" id="AL513382">
    <property type="protein sequence ID" value="CAD08112.1"/>
    <property type="molecule type" value="Genomic_DNA"/>
</dbReference>
<dbReference type="EMBL" id="AE014613">
    <property type="protein sequence ID" value="AAO71474.1"/>
    <property type="molecule type" value="Genomic_DNA"/>
</dbReference>
<dbReference type="PIR" id="S41887">
    <property type="entry name" value="S41887"/>
</dbReference>
<dbReference type="RefSeq" id="NP_458402.1">
    <property type="nucleotide sequence ID" value="NC_003198.1"/>
</dbReference>
<dbReference type="RefSeq" id="WP_001157751.1">
    <property type="nucleotide sequence ID" value="NZ_WSUR01000001.1"/>
</dbReference>
<dbReference type="SMR" id="P0AA20"/>
<dbReference type="STRING" id="220341.gene:17588125"/>
<dbReference type="GeneID" id="98390506"/>
<dbReference type="KEGG" id="stt:t4004"/>
<dbReference type="KEGG" id="sty:STY4294"/>
<dbReference type="PATRIC" id="fig|220341.7.peg.4388"/>
<dbReference type="eggNOG" id="COG0745">
    <property type="taxonomic scope" value="Bacteria"/>
</dbReference>
<dbReference type="HOGENOM" id="CLU_000445_30_4_6"/>
<dbReference type="OMA" id="HSGFDVQ"/>
<dbReference type="OrthoDB" id="9802426at2"/>
<dbReference type="Proteomes" id="UP000000541">
    <property type="component" value="Chromosome"/>
</dbReference>
<dbReference type="Proteomes" id="UP000002670">
    <property type="component" value="Chromosome"/>
</dbReference>
<dbReference type="GO" id="GO:0005829">
    <property type="term" value="C:cytosol"/>
    <property type="evidence" value="ECO:0007669"/>
    <property type="project" value="TreeGrafter"/>
</dbReference>
<dbReference type="GO" id="GO:0032993">
    <property type="term" value="C:protein-DNA complex"/>
    <property type="evidence" value="ECO:0007669"/>
    <property type="project" value="TreeGrafter"/>
</dbReference>
<dbReference type="GO" id="GO:0000156">
    <property type="term" value="F:phosphorelay response regulator activity"/>
    <property type="evidence" value="ECO:0007669"/>
    <property type="project" value="TreeGrafter"/>
</dbReference>
<dbReference type="GO" id="GO:0000976">
    <property type="term" value="F:transcription cis-regulatory region binding"/>
    <property type="evidence" value="ECO:0007669"/>
    <property type="project" value="TreeGrafter"/>
</dbReference>
<dbReference type="GO" id="GO:0006355">
    <property type="term" value="P:regulation of DNA-templated transcription"/>
    <property type="evidence" value="ECO:0007669"/>
    <property type="project" value="InterPro"/>
</dbReference>
<dbReference type="CDD" id="cd00383">
    <property type="entry name" value="trans_reg_C"/>
    <property type="match status" value="1"/>
</dbReference>
<dbReference type="FunFam" id="1.10.10.10:FF:000023">
    <property type="entry name" value="Two-component response regulator OmpR"/>
    <property type="match status" value="1"/>
</dbReference>
<dbReference type="FunFam" id="3.40.50.2300:FF:000008">
    <property type="entry name" value="Two-component response regulator OmpR"/>
    <property type="match status" value="1"/>
</dbReference>
<dbReference type="Gene3D" id="3.40.50.2300">
    <property type="match status" value="1"/>
</dbReference>
<dbReference type="Gene3D" id="6.10.250.690">
    <property type="match status" value="1"/>
</dbReference>
<dbReference type="Gene3D" id="1.10.10.10">
    <property type="entry name" value="Winged helix-like DNA-binding domain superfamily/Winged helix DNA-binding domain"/>
    <property type="match status" value="1"/>
</dbReference>
<dbReference type="InterPro" id="IPR011006">
    <property type="entry name" value="CheY-like_superfamily"/>
</dbReference>
<dbReference type="InterPro" id="IPR001867">
    <property type="entry name" value="OmpR/PhoB-type_DNA-bd"/>
</dbReference>
<dbReference type="InterPro" id="IPR016032">
    <property type="entry name" value="Sig_transdc_resp-reg_C-effctor"/>
</dbReference>
<dbReference type="InterPro" id="IPR001789">
    <property type="entry name" value="Sig_transdc_resp-reg_receiver"/>
</dbReference>
<dbReference type="InterPro" id="IPR039420">
    <property type="entry name" value="WalR-like"/>
</dbReference>
<dbReference type="InterPro" id="IPR036388">
    <property type="entry name" value="WH-like_DNA-bd_sf"/>
</dbReference>
<dbReference type="NCBIfam" id="NF007005">
    <property type="entry name" value="PRK09468.1"/>
    <property type="match status" value="1"/>
</dbReference>
<dbReference type="PANTHER" id="PTHR48111:SF4">
    <property type="entry name" value="DNA-BINDING DUAL TRANSCRIPTIONAL REGULATOR OMPR"/>
    <property type="match status" value="1"/>
</dbReference>
<dbReference type="PANTHER" id="PTHR48111">
    <property type="entry name" value="REGULATOR OF RPOS"/>
    <property type="match status" value="1"/>
</dbReference>
<dbReference type="Pfam" id="PF00072">
    <property type="entry name" value="Response_reg"/>
    <property type="match status" value="1"/>
</dbReference>
<dbReference type="Pfam" id="PF00486">
    <property type="entry name" value="Trans_reg_C"/>
    <property type="match status" value="1"/>
</dbReference>
<dbReference type="SMART" id="SM00448">
    <property type="entry name" value="REC"/>
    <property type="match status" value="1"/>
</dbReference>
<dbReference type="SMART" id="SM00862">
    <property type="entry name" value="Trans_reg_C"/>
    <property type="match status" value="1"/>
</dbReference>
<dbReference type="SUPFAM" id="SSF46894">
    <property type="entry name" value="C-terminal effector domain of the bipartite response regulators"/>
    <property type="match status" value="1"/>
</dbReference>
<dbReference type="SUPFAM" id="SSF52172">
    <property type="entry name" value="CheY-like"/>
    <property type="match status" value="1"/>
</dbReference>
<dbReference type="PROSITE" id="PS51755">
    <property type="entry name" value="OMPR_PHOB"/>
    <property type="match status" value="1"/>
</dbReference>
<dbReference type="PROSITE" id="PS50110">
    <property type="entry name" value="RESPONSE_REGULATORY"/>
    <property type="match status" value="1"/>
</dbReference>
<evidence type="ECO:0000250" key="1">
    <source>
        <dbReference type="UniProtKB" id="P0AA16"/>
    </source>
</evidence>
<evidence type="ECO:0000255" key="2">
    <source>
        <dbReference type="PROSITE-ProRule" id="PRU00169"/>
    </source>
</evidence>
<evidence type="ECO:0000255" key="3">
    <source>
        <dbReference type="PROSITE-ProRule" id="PRU01091"/>
    </source>
</evidence>
<evidence type="ECO:0000269" key="4">
    <source>
    </source>
</evidence>
<evidence type="ECO:0000303" key="5">
    <source>
    </source>
</evidence>
<evidence type="ECO:0000305" key="6"/>
<sequence length="239" mass="27354">MQENYKILVVDDDMRLRALLERYLTEQGFQVRSVANAEQMDRLLTRESFHLMVLDLMLPGEDGLSICRRLRSQSNPMPIIMVTAKGEEVDRIVGLEIGADDYIPKPFNPRELLARIRAVLRRQANELPGAPSQEEAVIAFGKFKLNLGTREMFREDEPMPLTSGEFAVLKALVSHPREPLSRDKLMNLARGREYSAMERSIDVQISRLRRMVEEDPAHPRYIQTVWGLGYVFVPDGSKA</sequence>
<reference key="1">
    <citation type="journal article" date="1994" name="Infect. Immun.">
        <title>Characterization of defined ompR mutants of Salmonella typhi: ompR is involved in the regulation of Vi polysaccharide expression.</title>
        <authorList>
            <person name="Pickard D.J."/>
            <person name="Li J."/>
            <person name="Roberts M.R."/>
            <person name="Maskell D."/>
            <person name="Hone D."/>
            <person name="Levine M."/>
            <person name="Dougan G."/>
            <person name="Chatfield S."/>
        </authorList>
    </citation>
    <scope>NUCLEOTIDE SEQUENCE [GENOMIC DNA]</scope>
    <scope>FUNCTION IN VIRULENCE</scope>
    <scope>DISRUPTION PHENOTYPE</scope>
    <source>
        <strain>ATCC 700931 / Ty2 / CVD908</strain>
    </source>
</reference>
<reference key="2">
    <citation type="journal article" date="1995" name="Asia Pac. J. Mol. Biol. Biotechnol.">
        <title>Cloning and characterization of the Salmonella typhi ompR and envZ genes.</title>
        <authorList>
            <person name="Martinez-Flores I."/>
            <person name="Bustamante V."/>
            <person name="Puente J.L."/>
            <person name="Calva E."/>
        </authorList>
    </citation>
    <scope>NUCLEOTIDE SEQUENCE [GENOMIC DNA]</scope>
    <source>
        <strain>IMSS-1</strain>
    </source>
</reference>
<reference key="3">
    <citation type="journal article" date="2001" name="Nature">
        <title>Complete genome sequence of a multiple drug resistant Salmonella enterica serovar Typhi CT18.</title>
        <authorList>
            <person name="Parkhill J."/>
            <person name="Dougan G."/>
            <person name="James K.D."/>
            <person name="Thomson N.R."/>
            <person name="Pickard D."/>
            <person name="Wain J."/>
            <person name="Churcher C.M."/>
            <person name="Mungall K.L."/>
            <person name="Bentley S.D."/>
            <person name="Holden M.T.G."/>
            <person name="Sebaihia M."/>
            <person name="Baker S."/>
            <person name="Basham D."/>
            <person name="Brooks K."/>
            <person name="Chillingworth T."/>
            <person name="Connerton P."/>
            <person name="Cronin A."/>
            <person name="Davis P."/>
            <person name="Davies R.M."/>
            <person name="Dowd L."/>
            <person name="White N."/>
            <person name="Farrar J."/>
            <person name="Feltwell T."/>
            <person name="Hamlin N."/>
            <person name="Haque A."/>
            <person name="Hien T.T."/>
            <person name="Holroyd S."/>
            <person name="Jagels K."/>
            <person name="Krogh A."/>
            <person name="Larsen T.S."/>
            <person name="Leather S."/>
            <person name="Moule S."/>
            <person name="O'Gaora P."/>
            <person name="Parry C."/>
            <person name="Quail M.A."/>
            <person name="Rutherford K.M."/>
            <person name="Simmonds M."/>
            <person name="Skelton J."/>
            <person name="Stevens K."/>
            <person name="Whitehead S."/>
            <person name="Barrell B.G."/>
        </authorList>
    </citation>
    <scope>NUCLEOTIDE SEQUENCE [LARGE SCALE GENOMIC DNA]</scope>
    <source>
        <strain>CT18</strain>
    </source>
</reference>
<reference key="4">
    <citation type="journal article" date="2003" name="J. Bacteriol.">
        <title>Comparative genomics of Salmonella enterica serovar Typhi strains Ty2 and CT18.</title>
        <authorList>
            <person name="Deng W."/>
            <person name="Liou S.-R."/>
            <person name="Plunkett G. III"/>
            <person name="Mayhew G.F."/>
            <person name="Rose D.J."/>
            <person name="Burland V."/>
            <person name="Kodoyianni V."/>
            <person name="Schwartz D.C."/>
            <person name="Blattner F.R."/>
        </authorList>
    </citation>
    <scope>NUCLEOTIDE SEQUENCE [LARGE SCALE GENOMIC DNA]</scope>
    <source>
        <strain>ATCC 700931 / Ty2</strain>
    </source>
</reference>
<proteinExistence type="evidence at protein level"/>
<name>OMPR_SALTI</name>
<gene>
    <name evidence="5" type="primary">ompR</name>
    <name evidence="5" type="synonym">ompB</name>
    <name type="ordered locus">STY4294</name>
    <name type="ordered locus">t4004</name>
</gene>
<feature type="chain" id="PRO_0000081179" description="DNA-binding dual transcriptional regulator OmpR">
    <location>
        <begin position="1"/>
        <end position="239"/>
    </location>
</feature>
<feature type="domain" description="Response regulatory" evidence="2">
    <location>
        <begin position="6"/>
        <end position="120"/>
    </location>
</feature>
<feature type="DNA-binding region" description="OmpR/PhoB-type" evidence="3">
    <location>
        <begin position="135"/>
        <end position="234"/>
    </location>
</feature>
<feature type="modified residue" description="4-aspartylphosphate" evidence="1 2">
    <location>
        <position position="55"/>
    </location>
</feature>
<feature type="sequence conflict" description="In Ref. 1; CAA55076." evidence="6" ref="1">
    <original>A</original>
    <variation>P</variation>
    <location>
        <position position="118"/>
    </location>
</feature>
<organism>
    <name type="scientific">Salmonella typhi</name>
    <dbReference type="NCBI Taxonomy" id="90370"/>
    <lineage>
        <taxon>Bacteria</taxon>
        <taxon>Pseudomonadati</taxon>
        <taxon>Pseudomonadota</taxon>
        <taxon>Gammaproteobacteria</taxon>
        <taxon>Enterobacterales</taxon>
        <taxon>Enterobacteriaceae</taxon>
        <taxon>Salmonella</taxon>
    </lineage>
</organism>
<keyword id="KW-0010">Activator</keyword>
<keyword id="KW-0963">Cytoplasm</keyword>
<keyword id="KW-0238">DNA-binding</keyword>
<keyword id="KW-0597">Phosphoprotein</keyword>
<keyword id="KW-0678">Repressor</keyword>
<keyword id="KW-0346">Stress response</keyword>
<keyword id="KW-0804">Transcription</keyword>
<keyword id="KW-0805">Transcription regulation</keyword>
<keyword id="KW-0902">Two-component regulatory system</keyword>
<comment type="function">
    <text evidence="1 4">Member of the two-component regulatory system EnvZ/OmpR involved in regulating expression of the outer membrane porins OmpC and OmpF as well as other genes. Unlike E.coli or S.typhimurium both porins are expressed constitutively. Involved in regulation of the biosynthesis of Vi polysaccharide, a capsular antigen thought to be involved in the virulence of S.typhi. Vi antigen is synthesized at low NaCl concentrations (under 0.4 M) (PubMed:8063417). Binds to the promoter of both ompC and ompF (By similarity).</text>
</comment>
<comment type="subunit">
    <text evidence="1">Monomer and multimer.</text>
</comment>
<comment type="subcellular location">
    <subcellularLocation>
        <location evidence="1">Cytoplasm</location>
    </subcellularLocation>
</comment>
<comment type="PTM">
    <text evidence="1">Phosphorylated by EnvZ; this stimulates its DNA-binding ability. Asp-55 is the primary phosphate acceptor site.</text>
</comment>
<comment type="disruption phenotype">
    <text evidence="4">Loss of expression of OmpC and OmpF under low and high osmolarity. No longer agglutinates with Vi antiserum, agglutinates with 09 antiserum without boiling, indicating the Vi polysaccharide is not masking the lipopolysaccharide antigen.</text>
</comment>
<protein>
    <recommendedName>
        <fullName evidence="6">DNA-binding dual transcriptional regulator OmpR</fullName>
    </recommendedName>
    <alternativeName>
        <fullName evidence="5">Transcriptional regulatory protein OmpR</fullName>
    </alternativeName>
</protein>
<accession>P0AA20</accession>
<accession>O31133</accession>
<accession>P03025</accession>
<accession>P08981</accession>
<accession>P41405</accession>